<reference key="1">
    <citation type="journal article" date="2003" name="Nature">
        <title>The genome sequence of Bacillus anthracis Ames and comparison to closely related bacteria.</title>
        <authorList>
            <person name="Read T.D."/>
            <person name="Peterson S.N."/>
            <person name="Tourasse N.J."/>
            <person name="Baillie L.W."/>
            <person name="Paulsen I.T."/>
            <person name="Nelson K.E."/>
            <person name="Tettelin H."/>
            <person name="Fouts D.E."/>
            <person name="Eisen J.A."/>
            <person name="Gill S.R."/>
            <person name="Holtzapple E.K."/>
            <person name="Okstad O.A."/>
            <person name="Helgason E."/>
            <person name="Rilstone J."/>
            <person name="Wu M."/>
            <person name="Kolonay J.F."/>
            <person name="Beanan M.J."/>
            <person name="Dodson R.J."/>
            <person name="Brinkac L.M."/>
            <person name="Gwinn M.L."/>
            <person name="DeBoy R.T."/>
            <person name="Madpu R."/>
            <person name="Daugherty S.C."/>
            <person name="Durkin A.S."/>
            <person name="Haft D.H."/>
            <person name="Nelson W.C."/>
            <person name="Peterson J.D."/>
            <person name="Pop M."/>
            <person name="Khouri H.M."/>
            <person name="Radune D."/>
            <person name="Benton J.L."/>
            <person name="Mahamoud Y."/>
            <person name="Jiang L."/>
            <person name="Hance I.R."/>
            <person name="Weidman J.F."/>
            <person name="Berry K.J."/>
            <person name="Plaut R.D."/>
            <person name="Wolf A.M."/>
            <person name="Watkins K.L."/>
            <person name="Nierman W.C."/>
            <person name="Hazen A."/>
            <person name="Cline R.T."/>
            <person name="Redmond C."/>
            <person name="Thwaite J.E."/>
            <person name="White O."/>
            <person name="Salzberg S.L."/>
            <person name="Thomason B."/>
            <person name="Friedlander A.M."/>
            <person name="Koehler T.M."/>
            <person name="Hanna P.C."/>
            <person name="Kolstoe A.-B."/>
            <person name="Fraser C.M."/>
        </authorList>
    </citation>
    <scope>NUCLEOTIDE SEQUENCE [LARGE SCALE GENOMIC DNA]</scope>
    <source>
        <strain>Ames / isolate Porton</strain>
    </source>
</reference>
<reference key="2">
    <citation type="journal article" date="2009" name="J. Bacteriol.">
        <title>The complete genome sequence of Bacillus anthracis Ames 'Ancestor'.</title>
        <authorList>
            <person name="Ravel J."/>
            <person name="Jiang L."/>
            <person name="Stanley S.T."/>
            <person name="Wilson M.R."/>
            <person name="Decker R.S."/>
            <person name="Read T.D."/>
            <person name="Worsham P."/>
            <person name="Keim P.S."/>
            <person name="Salzberg S.L."/>
            <person name="Fraser-Liggett C.M."/>
            <person name="Rasko D.A."/>
        </authorList>
    </citation>
    <scope>NUCLEOTIDE SEQUENCE [LARGE SCALE GENOMIC DNA]</scope>
    <source>
        <strain>Ames ancestor</strain>
    </source>
</reference>
<reference key="3">
    <citation type="submission" date="2004-01" db="EMBL/GenBank/DDBJ databases">
        <title>Complete genome sequence of Bacillus anthracis Sterne.</title>
        <authorList>
            <person name="Brettin T.S."/>
            <person name="Bruce D."/>
            <person name="Challacombe J.F."/>
            <person name="Gilna P."/>
            <person name="Han C."/>
            <person name="Hill K."/>
            <person name="Hitchcock P."/>
            <person name="Jackson P."/>
            <person name="Keim P."/>
            <person name="Longmire J."/>
            <person name="Lucas S."/>
            <person name="Okinaka R."/>
            <person name="Richardson P."/>
            <person name="Rubin E."/>
            <person name="Tice H."/>
        </authorList>
    </citation>
    <scope>NUCLEOTIDE SEQUENCE [LARGE SCALE GENOMIC DNA]</scope>
    <source>
        <strain>Sterne</strain>
    </source>
</reference>
<accession>Q81X04</accession>
<accession>Q6HQT8</accession>
<accession>Q6KK58</accession>
<feature type="chain" id="PRO_0000030083" description="S-adenosylmethionine decarboxylase 2 beta chain" evidence="1">
    <location>
        <begin position="1"/>
        <end position="64"/>
    </location>
</feature>
<feature type="chain" id="PRO_0000030084" description="S-adenosylmethionine decarboxylase 2 alpha chain" evidence="1">
    <location>
        <begin position="65"/>
        <end position="123"/>
    </location>
</feature>
<feature type="active site" description="Schiff-base intermediate with substrate; via pyruvic acid" evidence="2">
    <location>
        <position position="65"/>
    </location>
</feature>
<feature type="active site" description="Proton acceptor; for processing activity" evidence="2">
    <location>
        <position position="70"/>
    </location>
</feature>
<feature type="active site" description="Proton donor; for catalytic activity" evidence="2">
    <location>
        <position position="85"/>
    </location>
</feature>
<feature type="site" description="Cleavage (non-hydrolytic); by autolysis" evidence="2">
    <location>
        <begin position="64"/>
        <end position="65"/>
    </location>
</feature>
<feature type="modified residue" description="Pyruvic acid (Ser); by autocatalysis" evidence="2">
    <location>
        <position position="65"/>
    </location>
</feature>
<sequence>MEYSTFGKHIIVDLWGVDFSLLDDMYFLEHHLIHAADLSGAHVLNVSTKEFDPHGVTVLVLLSESHLSIHTYPEQNFAAIDCYTCGTTVEPQIAIDYIVSILKPNEMHIRRLIRGIGEIVNTD</sequence>
<comment type="function">
    <text evidence="2">Catalyzes the decarboxylation of S-adenosylmethionine to S-adenosylmethioninamine (dcAdoMet), the propylamine donor required for the synthesis of the polyamines spermine and spermidine from the diamine putrescine.</text>
</comment>
<comment type="catalytic activity">
    <reaction evidence="2">
        <text>S-adenosyl-L-methionine + H(+) = S-adenosyl 3-(methylsulfanyl)propylamine + CO2</text>
        <dbReference type="Rhea" id="RHEA:15981"/>
        <dbReference type="ChEBI" id="CHEBI:15378"/>
        <dbReference type="ChEBI" id="CHEBI:16526"/>
        <dbReference type="ChEBI" id="CHEBI:57443"/>
        <dbReference type="ChEBI" id="CHEBI:59789"/>
        <dbReference type="EC" id="4.1.1.50"/>
    </reaction>
</comment>
<comment type="cofactor">
    <cofactor evidence="2">
        <name>pyruvate</name>
        <dbReference type="ChEBI" id="CHEBI:15361"/>
    </cofactor>
    <text evidence="2">Binds 1 pyruvoyl group covalently per subunit.</text>
</comment>
<comment type="pathway">
    <text evidence="2">Amine and polyamine biosynthesis; S-adenosylmethioninamine biosynthesis; S-adenosylmethioninamine from S-adenosyl-L-methionine: step 1/1.</text>
</comment>
<comment type="subunit">
    <text evidence="2">Heterotetramer of two alpha and two beta chains arranged as a dimer of alpha/beta heterodimers.</text>
</comment>
<comment type="PTM">
    <text evidence="2">Is synthesized initially as an inactive proenzyme. Formation of the active enzyme involves a self-maturation process in which the active site pyruvoyl group is generated from an internal serine residue via an autocatalytic post-translational modification. Two non-identical subunits are generated from the proenzyme in this reaction, and the pyruvate is formed at the N-terminus of the alpha chain, which is derived from the carboxyl end of the proenzyme. The post-translation cleavage follows an unusual pathway, termed non-hydrolytic serinolysis, in which the side chain hydroxyl group of the serine supplies its oxygen atom to form the C-terminus of the beta chain, while the remainder of the serine residue undergoes an oxidative deamination to produce ammonia and the pyruvoyl group blocking the N-terminus of the alpha chain.</text>
</comment>
<comment type="similarity">
    <text evidence="2">Belongs to the prokaryotic AdoMetDC family. Type 1 subfamily.</text>
</comment>
<protein>
    <recommendedName>
        <fullName evidence="2">S-adenosylmethionine decarboxylase proenzyme 2</fullName>
        <shortName evidence="2">AdoMetDC 2</shortName>
        <shortName evidence="2">SAMDC 2</shortName>
        <ecNumber evidence="2">4.1.1.50</ecNumber>
    </recommendedName>
    <component>
        <recommendedName>
            <fullName>S-adenosylmethionine decarboxylase 2 beta chain</fullName>
        </recommendedName>
    </component>
    <component>
        <recommendedName>
            <fullName>S-adenosylmethionine decarboxylase 2 alpha chain</fullName>
        </recommendedName>
    </component>
</protein>
<organism>
    <name type="scientific">Bacillus anthracis</name>
    <dbReference type="NCBI Taxonomy" id="1392"/>
    <lineage>
        <taxon>Bacteria</taxon>
        <taxon>Bacillati</taxon>
        <taxon>Bacillota</taxon>
        <taxon>Bacilli</taxon>
        <taxon>Bacillales</taxon>
        <taxon>Bacillaceae</taxon>
        <taxon>Bacillus</taxon>
        <taxon>Bacillus cereus group</taxon>
    </lineage>
</organism>
<dbReference type="EC" id="4.1.1.50" evidence="2"/>
<dbReference type="EMBL" id="AE016879">
    <property type="protein sequence ID" value="AAP29100.1"/>
    <property type="molecule type" value="Genomic_DNA"/>
</dbReference>
<dbReference type="EMBL" id="AE017334">
    <property type="protein sequence ID" value="AAT34584.1"/>
    <property type="molecule type" value="Genomic_DNA"/>
</dbReference>
<dbReference type="EMBL" id="AE017225">
    <property type="protein sequence ID" value="AAT57350.1"/>
    <property type="molecule type" value="Genomic_DNA"/>
</dbReference>
<dbReference type="RefSeq" id="NP_847614.1">
    <property type="nucleotide sequence ID" value="NC_003997.3"/>
</dbReference>
<dbReference type="RefSeq" id="YP_031300.1">
    <property type="nucleotide sequence ID" value="NC_005945.1"/>
</dbReference>
<dbReference type="SMR" id="Q81X04"/>
<dbReference type="STRING" id="261594.GBAA_5446"/>
<dbReference type="DNASU" id="1085056"/>
<dbReference type="GeneID" id="45025044"/>
<dbReference type="KEGG" id="ban:BA_5446"/>
<dbReference type="KEGG" id="banh:HYU01_26600"/>
<dbReference type="KEGG" id="bar:GBAA_5446"/>
<dbReference type="KEGG" id="bat:BAS5061"/>
<dbReference type="PATRIC" id="fig|198094.11.peg.5405"/>
<dbReference type="eggNOG" id="COG1586">
    <property type="taxonomic scope" value="Bacteria"/>
</dbReference>
<dbReference type="HOGENOM" id="CLU_125470_2_3_9"/>
<dbReference type="OMA" id="FMCGACD"/>
<dbReference type="OrthoDB" id="9793120at2"/>
<dbReference type="UniPathway" id="UPA00331">
    <property type="reaction ID" value="UER00451"/>
</dbReference>
<dbReference type="Proteomes" id="UP000000427">
    <property type="component" value="Chromosome"/>
</dbReference>
<dbReference type="Proteomes" id="UP000000594">
    <property type="component" value="Chromosome"/>
</dbReference>
<dbReference type="GO" id="GO:0005829">
    <property type="term" value="C:cytosol"/>
    <property type="evidence" value="ECO:0007669"/>
    <property type="project" value="TreeGrafter"/>
</dbReference>
<dbReference type="GO" id="GO:0004014">
    <property type="term" value="F:adenosylmethionine decarboxylase activity"/>
    <property type="evidence" value="ECO:0007669"/>
    <property type="project" value="UniProtKB-UniRule"/>
</dbReference>
<dbReference type="GO" id="GO:0008295">
    <property type="term" value="P:spermidine biosynthetic process"/>
    <property type="evidence" value="ECO:0007669"/>
    <property type="project" value="UniProtKB-UniRule"/>
</dbReference>
<dbReference type="FunFam" id="3.30.360.110:FF:000001">
    <property type="entry name" value="S-adenosylmethionine decarboxylase proenzyme"/>
    <property type="match status" value="1"/>
</dbReference>
<dbReference type="Gene3D" id="3.30.160.750">
    <property type="match status" value="1"/>
</dbReference>
<dbReference type="Gene3D" id="3.30.360.110">
    <property type="entry name" value="S-adenosylmethionine decarboxylase domain"/>
    <property type="match status" value="1"/>
</dbReference>
<dbReference type="HAMAP" id="MF_00464">
    <property type="entry name" value="AdoMetDC_1"/>
    <property type="match status" value="1"/>
</dbReference>
<dbReference type="InterPro" id="IPR042286">
    <property type="entry name" value="AdoMetDC_C"/>
</dbReference>
<dbReference type="InterPro" id="IPR003826">
    <property type="entry name" value="AdoMetDC_fam_prok"/>
</dbReference>
<dbReference type="InterPro" id="IPR042284">
    <property type="entry name" value="AdoMetDC_N"/>
</dbReference>
<dbReference type="InterPro" id="IPR016067">
    <property type="entry name" value="S-AdoMet_deCO2ase_core"/>
</dbReference>
<dbReference type="InterPro" id="IPR017716">
    <property type="entry name" value="S-AdoMet_deCOase_pro-enz"/>
</dbReference>
<dbReference type="NCBIfam" id="TIGR03330">
    <property type="entry name" value="SAM_DCase_Bsu"/>
    <property type="match status" value="1"/>
</dbReference>
<dbReference type="PANTHER" id="PTHR33866">
    <property type="entry name" value="S-ADENOSYLMETHIONINE DECARBOXYLASE PROENZYME"/>
    <property type="match status" value="1"/>
</dbReference>
<dbReference type="PANTHER" id="PTHR33866:SF2">
    <property type="entry name" value="S-ADENOSYLMETHIONINE DECARBOXYLASE PROENZYME"/>
    <property type="match status" value="1"/>
</dbReference>
<dbReference type="Pfam" id="PF02675">
    <property type="entry name" value="AdoMet_dc"/>
    <property type="match status" value="1"/>
</dbReference>
<dbReference type="SUPFAM" id="SSF56276">
    <property type="entry name" value="S-adenosylmethionine decarboxylase"/>
    <property type="match status" value="1"/>
</dbReference>
<name>SPEH2_BACAN</name>
<keyword id="KW-0068">Autocatalytic cleavage</keyword>
<keyword id="KW-0210">Decarboxylase</keyword>
<keyword id="KW-0456">Lyase</keyword>
<keyword id="KW-0620">Polyamine biosynthesis</keyword>
<keyword id="KW-0670">Pyruvate</keyword>
<keyword id="KW-1185">Reference proteome</keyword>
<keyword id="KW-0949">S-adenosyl-L-methionine</keyword>
<keyword id="KW-0704">Schiff base</keyword>
<keyword id="KW-0745">Spermidine biosynthesis</keyword>
<keyword id="KW-0865">Zymogen</keyword>
<gene>
    <name evidence="2" type="primary">speH2</name>
    <name type="synonym">speD-2</name>
    <name type="ordered locus">BA_5446</name>
    <name type="ordered locus">GBAA_5446</name>
    <name type="ordered locus">BAS5061</name>
</gene>
<proteinExistence type="inferred from homology"/>
<evidence type="ECO:0000250" key="1"/>
<evidence type="ECO:0000255" key="2">
    <source>
        <dbReference type="HAMAP-Rule" id="MF_00464"/>
    </source>
</evidence>